<name>RL6_SHEB2</name>
<proteinExistence type="inferred from homology"/>
<evidence type="ECO:0000255" key="1">
    <source>
        <dbReference type="HAMAP-Rule" id="MF_01365"/>
    </source>
</evidence>
<evidence type="ECO:0000305" key="2"/>
<keyword id="KW-0687">Ribonucleoprotein</keyword>
<keyword id="KW-0689">Ribosomal protein</keyword>
<keyword id="KW-0694">RNA-binding</keyword>
<keyword id="KW-0699">rRNA-binding</keyword>
<gene>
    <name evidence="1" type="primary">rplF</name>
    <name type="ordered locus">Sbal223_4041</name>
</gene>
<reference key="1">
    <citation type="submission" date="2008-12" db="EMBL/GenBank/DDBJ databases">
        <title>Complete sequence of chromosome of Shewanella baltica OS223.</title>
        <authorList>
            <consortium name="US DOE Joint Genome Institute"/>
            <person name="Lucas S."/>
            <person name="Copeland A."/>
            <person name="Lapidus A."/>
            <person name="Glavina del Rio T."/>
            <person name="Dalin E."/>
            <person name="Tice H."/>
            <person name="Bruce D."/>
            <person name="Goodwin L."/>
            <person name="Pitluck S."/>
            <person name="Chertkov O."/>
            <person name="Meincke L."/>
            <person name="Brettin T."/>
            <person name="Detter J.C."/>
            <person name="Han C."/>
            <person name="Kuske C.R."/>
            <person name="Larimer F."/>
            <person name="Land M."/>
            <person name="Hauser L."/>
            <person name="Kyrpides N."/>
            <person name="Ovchinnikova G."/>
            <person name="Brettar I."/>
            <person name="Rodrigues J."/>
            <person name="Konstantinidis K."/>
            <person name="Tiedje J."/>
        </authorList>
    </citation>
    <scope>NUCLEOTIDE SEQUENCE [LARGE SCALE GENOMIC DNA]</scope>
    <source>
        <strain>OS223</strain>
    </source>
</reference>
<dbReference type="EMBL" id="CP001252">
    <property type="protein sequence ID" value="ACK48514.1"/>
    <property type="molecule type" value="Genomic_DNA"/>
</dbReference>
<dbReference type="RefSeq" id="WP_006083585.1">
    <property type="nucleotide sequence ID" value="NC_011663.1"/>
</dbReference>
<dbReference type="SMR" id="B8EBJ0"/>
<dbReference type="GeneID" id="11774510"/>
<dbReference type="KEGG" id="sbp:Sbal223_4041"/>
<dbReference type="HOGENOM" id="CLU_065464_1_2_6"/>
<dbReference type="Proteomes" id="UP000002507">
    <property type="component" value="Chromosome"/>
</dbReference>
<dbReference type="GO" id="GO:0022625">
    <property type="term" value="C:cytosolic large ribosomal subunit"/>
    <property type="evidence" value="ECO:0007669"/>
    <property type="project" value="TreeGrafter"/>
</dbReference>
<dbReference type="GO" id="GO:0019843">
    <property type="term" value="F:rRNA binding"/>
    <property type="evidence" value="ECO:0007669"/>
    <property type="project" value="UniProtKB-UniRule"/>
</dbReference>
<dbReference type="GO" id="GO:0003735">
    <property type="term" value="F:structural constituent of ribosome"/>
    <property type="evidence" value="ECO:0007669"/>
    <property type="project" value="InterPro"/>
</dbReference>
<dbReference type="GO" id="GO:0002181">
    <property type="term" value="P:cytoplasmic translation"/>
    <property type="evidence" value="ECO:0007669"/>
    <property type="project" value="TreeGrafter"/>
</dbReference>
<dbReference type="FunFam" id="3.90.930.12:FF:000001">
    <property type="entry name" value="50S ribosomal protein L6"/>
    <property type="match status" value="1"/>
</dbReference>
<dbReference type="FunFam" id="3.90.930.12:FF:000002">
    <property type="entry name" value="50S ribosomal protein L6"/>
    <property type="match status" value="1"/>
</dbReference>
<dbReference type="Gene3D" id="3.90.930.12">
    <property type="entry name" value="Ribosomal protein L6, alpha-beta domain"/>
    <property type="match status" value="2"/>
</dbReference>
<dbReference type="HAMAP" id="MF_01365_B">
    <property type="entry name" value="Ribosomal_uL6_B"/>
    <property type="match status" value="1"/>
</dbReference>
<dbReference type="InterPro" id="IPR000702">
    <property type="entry name" value="Ribosomal_uL6-like"/>
</dbReference>
<dbReference type="InterPro" id="IPR036789">
    <property type="entry name" value="Ribosomal_uL6-like_a/b-dom_sf"/>
</dbReference>
<dbReference type="InterPro" id="IPR020040">
    <property type="entry name" value="Ribosomal_uL6_a/b-dom"/>
</dbReference>
<dbReference type="InterPro" id="IPR019906">
    <property type="entry name" value="Ribosomal_uL6_bac-type"/>
</dbReference>
<dbReference type="InterPro" id="IPR002358">
    <property type="entry name" value="Ribosomal_uL6_CS"/>
</dbReference>
<dbReference type="NCBIfam" id="TIGR03654">
    <property type="entry name" value="L6_bact"/>
    <property type="match status" value="1"/>
</dbReference>
<dbReference type="PANTHER" id="PTHR11655">
    <property type="entry name" value="60S/50S RIBOSOMAL PROTEIN L6/L9"/>
    <property type="match status" value="1"/>
</dbReference>
<dbReference type="PANTHER" id="PTHR11655:SF14">
    <property type="entry name" value="LARGE RIBOSOMAL SUBUNIT PROTEIN UL6M"/>
    <property type="match status" value="1"/>
</dbReference>
<dbReference type="Pfam" id="PF00347">
    <property type="entry name" value="Ribosomal_L6"/>
    <property type="match status" value="2"/>
</dbReference>
<dbReference type="PIRSF" id="PIRSF002162">
    <property type="entry name" value="Ribosomal_L6"/>
    <property type="match status" value="1"/>
</dbReference>
<dbReference type="PRINTS" id="PR00059">
    <property type="entry name" value="RIBOSOMALL6"/>
</dbReference>
<dbReference type="SUPFAM" id="SSF56053">
    <property type="entry name" value="Ribosomal protein L6"/>
    <property type="match status" value="2"/>
</dbReference>
<dbReference type="PROSITE" id="PS00525">
    <property type="entry name" value="RIBOSOMAL_L6_1"/>
    <property type="match status" value="1"/>
</dbReference>
<sequence length="177" mass="18911">MSRVAKAPVSIPAGVEVTLNEQTLTVKGGKGSLTRVINNAVNVVIEAGVVKFLPVEGVSNAWAQAGTTRALVNNMVVGVSQGFERKLKLVGVGYRAKLVGSDIDLTLGFSHPLVHKLPAGVTAECPSQTDIVLRGVDKQLIGQVAAEIRGYRPPEPYKGKGVRYDDEVVRRKEAKKK</sequence>
<organism>
    <name type="scientific">Shewanella baltica (strain OS223)</name>
    <dbReference type="NCBI Taxonomy" id="407976"/>
    <lineage>
        <taxon>Bacteria</taxon>
        <taxon>Pseudomonadati</taxon>
        <taxon>Pseudomonadota</taxon>
        <taxon>Gammaproteobacteria</taxon>
        <taxon>Alteromonadales</taxon>
        <taxon>Shewanellaceae</taxon>
        <taxon>Shewanella</taxon>
    </lineage>
</organism>
<comment type="function">
    <text evidence="1">This protein binds to the 23S rRNA, and is important in its secondary structure. It is located near the subunit interface in the base of the L7/L12 stalk, and near the tRNA binding site of the peptidyltransferase center.</text>
</comment>
<comment type="subunit">
    <text evidence="1">Part of the 50S ribosomal subunit.</text>
</comment>
<comment type="similarity">
    <text evidence="1">Belongs to the universal ribosomal protein uL6 family.</text>
</comment>
<accession>B8EBJ0</accession>
<protein>
    <recommendedName>
        <fullName evidence="1">Large ribosomal subunit protein uL6</fullName>
    </recommendedName>
    <alternativeName>
        <fullName evidence="2">50S ribosomal protein L6</fullName>
    </alternativeName>
</protein>
<feature type="chain" id="PRO_1000166828" description="Large ribosomal subunit protein uL6">
    <location>
        <begin position="1"/>
        <end position="177"/>
    </location>
</feature>